<accession>Q91YL3</accession>
<evidence type="ECO:0000250" key="1"/>
<evidence type="ECO:0000250" key="2">
    <source>
        <dbReference type="UniProtKB" id="Q9NWZ5"/>
    </source>
</evidence>
<evidence type="ECO:0000255" key="3"/>
<evidence type="ECO:0000256" key="4">
    <source>
        <dbReference type="SAM" id="MobiDB-lite"/>
    </source>
</evidence>
<evidence type="ECO:0000305" key="5"/>
<evidence type="ECO:0007744" key="6">
    <source>
    </source>
</evidence>
<sequence>MAAPPASMSAAPSPLQSAVAPDVPGRQAEQNETACEDRSNAGTLDRLLPPVGTGRSPRKRTTSQCKSEPPLLRTSKRTIYTAGRPPWYNEHGTQSKEAFAIGLGGGSASGKTTVARMIIEALDVPWVVLLSMDSFYKVLTQQQQEQAACNNFNFDHPDAFDFDLIISTLKKLKQGRSVQVPIYDFTTHSRKKDWKTLYGANVIIFEGIMAFADKTLLELLDMKIFVDTDSDIRLVRRLRRDISERGRDIEGVIKQYNKFVKPAFDQYIQPTMRLADIVVPRGSGNTVAIDLIVQHVHSQLEERELSVRAALASAHQCHPLPQTLSVLKSTPQVRGMHTIIRDKETSRDEFIFYSKRLMRLLIEHALSFLPFQDCTVQTPQGQDYVGKCYAGKQITGVSILRAGETMEPALRAVCKDVRIGTILIQTNQLTGEPELHYLRLPKDISDDHVILMDCTVSTGAAAMMAVRVLLDHDVPEDKIFLLSLLMAEMGVHSVAYAFPRVRIITTAVDKRVNDLFRIIPGIGNFGDRYFGTDAVPDGSDDDEAATVG</sequence>
<protein>
    <recommendedName>
        <fullName>Uridine-cytidine kinase-like 1</fullName>
        <ecNumber>2.7.1.48</ecNumber>
    </recommendedName>
</protein>
<keyword id="KW-0067">ATP-binding</keyword>
<keyword id="KW-0963">Cytoplasm</keyword>
<keyword id="KW-0418">Kinase</keyword>
<keyword id="KW-0547">Nucleotide-binding</keyword>
<keyword id="KW-0539">Nucleus</keyword>
<keyword id="KW-0597">Phosphoprotein</keyword>
<keyword id="KW-1185">Reference proteome</keyword>
<keyword id="KW-0808">Transferase</keyword>
<keyword id="KW-0832">Ubl conjugation</keyword>
<proteinExistence type="evidence at protein level"/>
<comment type="function">
    <text evidence="1">May contribute to UTP accumulation needed for blast transformation and proliferation.</text>
</comment>
<comment type="catalytic activity">
    <reaction>
        <text>uridine + ATP = UMP + ADP + H(+)</text>
        <dbReference type="Rhea" id="RHEA:16825"/>
        <dbReference type="ChEBI" id="CHEBI:15378"/>
        <dbReference type="ChEBI" id="CHEBI:16704"/>
        <dbReference type="ChEBI" id="CHEBI:30616"/>
        <dbReference type="ChEBI" id="CHEBI:57865"/>
        <dbReference type="ChEBI" id="CHEBI:456216"/>
        <dbReference type="EC" id="2.7.1.48"/>
    </reaction>
</comment>
<comment type="catalytic activity">
    <reaction>
        <text>cytidine + ATP = CMP + ADP + H(+)</text>
        <dbReference type="Rhea" id="RHEA:24674"/>
        <dbReference type="ChEBI" id="CHEBI:15378"/>
        <dbReference type="ChEBI" id="CHEBI:17562"/>
        <dbReference type="ChEBI" id="CHEBI:30616"/>
        <dbReference type="ChEBI" id="CHEBI:60377"/>
        <dbReference type="ChEBI" id="CHEBI:456216"/>
        <dbReference type="EC" id="2.7.1.48"/>
    </reaction>
</comment>
<comment type="pathway">
    <text>Pyrimidine metabolism; UMP biosynthesis via salvage pathway; UMP from uridine: step 1/1.</text>
</comment>
<comment type="subunit">
    <text evidence="1">Interacts with RNF19B.</text>
</comment>
<comment type="subcellular location">
    <subcellularLocation>
        <location evidence="1">Cytoplasm</location>
    </subcellularLocation>
    <subcellularLocation>
        <location evidence="1">Nucleus</location>
    </subcellularLocation>
</comment>
<comment type="PTM">
    <text evidence="1">Ubiquitinated by RNF19B; which induces proteasomal degradation.</text>
</comment>
<comment type="similarity">
    <text evidence="5">Belongs to the uridine kinase family.</text>
</comment>
<name>UCKL1_MOUSE</name>
<organism>
    <name type="scientific">Mus musculus</name>
    <name type="common">Mouse</name>
    <dbReference type="NCBI Taxonomy" id="10090"/>
    <lineage>
        <taxon>Eukaryota</taxon>
        <taxon>Metazoa</taxon>
        <taxon>Chordata</taxon>
        <taxon>Craniata</taxon>
        <taxon>Vertebrata</taxon>
        <taxon>Euteleostomi</taxon>
        <taxon>Mammalia</taxon>
        <taxon>Eutheria</taxon>
        <taxon>Euarchontoglires</taxon>
        <taxon>Glires</taxon>
        <taxon>Rodentia</taxon>
        <taxon>Myomorpha</taxon>
        <taxon>Muroidea</taxon>
        <taxon>Muridae</taxon>
        <taxon>Murinae</taxon>
        <taxon>Mus</taxon>
        <taxon>Mus</taxon>
    </lineage>
</organism>
<reference key="1">
    <citation type="journal article" date="2004" name="Genome Res.">
        <title>The status, quality, and expansion of the NIH full-length cDNA project: the Mammalian Gene Collection (MGC).</title>
        <authorList>
            <consortium name="The MGC Project Team"/>
        </authorList>
    </citation>
    <scope>NUCLEOTIDE SEQUENCE [LARGE SCALE MRNA]</scope>
</reference>
<reference key="2">
    <citation type="journal article" date="2010" name="Cell">
        <title>A tissue-specific atlas of mouse protein phosphorylation and expression.</title>
        <authorList>
            <person name="Huttlin E.L."/>
            <person name="Jedrychowski M.P."/>
            <person name="Elias J.E."/>
            <person name="Goswami T."/>
            <person name="Rad R."/>
            <person name="Beausoleil S.A."/>
            <person name="Villen J."/>
            <person name="Haas W."/>
            <person name="Sowa M.E."/>
            <person name="Gygi S.P."/>
        </authorList>
    </citation>
    <scope>PHOSPHORYLATION [LARGE SCALE ANALYSIS] AT SER-63</scope>
    <scope>IDENTIFICATION BY MASS SPECTROMETRY [LARGE SCALE ANALYSIS]</scope>
    <source>
        <tissue>Brain</tissue>
        <tissue>Brown adipose tissue</tissue>
        <tissue>Heart</tissue>
        <tissue>Kidney</tissue>
        <tissue>Lung</tissue>
        <tissue>Pancreas</tissue>
        <tissue>Spleen</tissue>
    </source>
</reference>
<feature type="chain" id="PRO_0000164461" description="Uridine-cytidine kinase-like 1">
    <location>
        <begin position="1"/>
        <end position="548"/>
    </location>
</feature>
<feature type="region of interest" description="Disordered" evidence="4">
    <location>
        <begin position="1"/>
        <end position="74"/>
    </location>
</feature>
<feature type="compositionally biased region" description="Low complexity" evidence="4">
    <location>
        <begin position="1"/>
        <end position="18"/>
    </location>
</feature>
<feature type="binding site" evidence="3">
    <location>
        <begin position="105"/>
        <end position="112"/>
    </location>
    <ligand>
        <name>ATP</name>
        <dbReference type="ChEBI" id="CHEBI:30616"/>
    </ligand>
</feature>
<feature type="modified residue" description="Phosphoserine" evidence="2">
    <location>
        <position position="56"/>
    </location>
</feature>
<feature type="modified residue" description="Phosphoserine" evidence="6">
    <location>
        <position position="63"/>
    </location>
</feature>
<feature type="modified residue" description="Phosphoserine" evidence="2">
    <location>
        <position position="539"/>
    </location>
</feature>
<gene>
    <name type="primary">Uckl1</name>
    <name type="synonym">Urkl1</name>
</gene>
<dbReference type="EC" id="2.7.1.48"/>
<dbReference type="EMBL" id="BC016535">
    <property type="protein sequence ID" value="AAH16535.1"/>
    <property type="molecule type" value="mRNA"/>
</dbReference>
<dbReference type="CCDS" id="CCDS17216.1"/>
<dbReference type="RefSeq" id="NP_081041.2">
    <property type="nucleotide sequence ID" value="NM_026765.3"/>
</dbReference>
<dbReference type="SMR" id="Q91YL3"/>
<dbReference type="BioGRID" id="212925">
    <property type="interactions" value="13"/>
</dbReference>
<dbReference type="FunCoup" id="Q91YL3">
    <property type="interactions" value="1874"/>
</dbReference>
<dbReference type="STRING" id="10090.ENSMUSP00000050398"/>
<dbReference type="iPTMnet" id="Q91YL3"/>
<dbReference type="PhosphoSitePlus" id="Q91YL3"/>
<dbReference type="SwissPalm" id="Q91YL3"/>
<dbReference type="PaxDb" id="10090-ENSMUSP00000050398"/>
<dbReference type="PeptideAtlas" id="Q91YL3"/>
<dbReference type="ProteomicsDB" id="297799"/>
<dbReference type="Pumba" id="Q91YL3"/>
<dbReference type="Antibodypedia" id="1482">
    <property type="antibodies" value="144 antibodies from 27 providers"/>
</dbReference>
<dbReference type="DNASU" id="68556"/>
<dbReference type="Ensembl" id="ENSMUST00000057816.15">
    <property type="protein sequence ID" value="ENSMUSP00000050398.9"/>
    <property type="gene ID" value="ENSMUSG00000089917.8"/>
</dbReference>
<dbReference type="GeneID" id="68556"/>
<dbReference type="KEGG" id="mmu:68556"/>
<dbReference type="UCSC" id="uc008oms.2">
    <property type="organism name" value="mouse"/>
</dbReference>
<dbReference type="AGR" id="MGI:1915806"/>
<dbReference type="CTD" id="54963"/>
<dbReference type="MGI" id="MGI:1915806">
    <property type="gene designation" value="Uckl1"/>
</dbReference>
<dbReference type="VEuPathDB" id="HostDB:ENSMUSG00000089917"/>
<dbReference type="eggNOG" id="KOG4203">
    <property type="taxonomic scope" value="Eukaryota"/>
</dbReference>
<dbReference type="GeneTree" id="ENSGT01020000230412"/>
<dbReference type="HOGENOM" id="CLU_021278_0_1_1"/>
<dbReference type="InParanoid" id="Q91YL3"/>
<dbReference type="OMA" id="EPQLHCE"/>
<dbReference type="PhylomeDB" id="Q91YL3"/>
<dbReference type="TreeFam" id="TF105902"/>
<dbReference type="Reactome" id="R-MMU-73614">
    <property type="pathway name" value="Pyrimidine salvage"/>
</dbReference>
<dbReference type="UniPathway" id="UPA00574">
    <property type="reaction ID" value="UER00637"/>
</dbReference>
<dbReference type="BioGRID-ORCS" id="68556">
    <property type="hits" value="2 hits in 78 CRISPR screens"/>
</dbReference>
<dbReference type="ChiTaRS" id="Uckl1">
    <property type="organism name" value="mouse"/>
</dbReference>
<dbReference type="PRO" id="PR:Q91YL3"/>
<dbReference type="Proteomes" id="UP000000589">
    <property type="component" value="Chromosome 2"/>
</dbReference>
<dbReference type="RNAct" id="Q91YL3">
    <property type="molecule type" value="protein"/>
</dbReference>
<dbReference type="Bgee" id="ENSMUSG00000089917">
    <property type="expression patterns" value="Expressed in retinal neural layer and 244 other cell types or tissues"/>
</dbReference>
<dbReference type="ExpressionAtlas" id="Q91YL3">
    <property type="expression patterns" value="baseline and differential"/>
</dbReference>
<dbReference type="GO" id="GO:0005737">
    <property type="term" value="C:cytoplasm"/>
    <property type="evidence" value="ECO:0007669"/>
    <property type="project" value="UniProtKB-SubCell"/>
</dbReference>
<dbReference type="GO" id="GO:0005634">
    <property type="term" value="C:nucleus"/>
    <property type="evidence" value="ECO:0007669"/>
    <property type="project" value="UniProtKB-SubCell"/>
</dbReference>
<dbReference type="GO" id="GO:0005524">
    <property type="term" value="F:ATP binding"/>
    <property type="evidence" value="ECO:0007669"/>
    <property type="project" value="UniProtKB-KW"/>
</dbReference>
<dbReference type="GO" id="GO:0043771">
    <property type="term" value="F:cytidine kinase activity"/>
    <property type="evidence" value="ECO:0007669"/>
    <property type="project" value="RHEA"/>
</dbReference>
<dbReference type="GO" id="GO:0004849">
    <property type="term" value="F:uridine kinase activity"/>
    <property type="evidence" value="ECO:0007669"/>
    <property type="project" value="UniProtKB-EC"/>
</dbReference>
<dbReference type="GO" id="GO:0044206">
    <property type="term" value="P:UMP salvage"/>
    <property type="evidence" value="ECO:0007669"/>
    <property type="project" value="UniProtKB-UniPathway"/>
</dbReference>
<dbReference type="CDD" id="cd06223">
    <property type="entry name" value="PRTases_typeI"/>
    <property type="match status" value="1"/>
</dbReference>
<dbReference type="CDD" id="cd02023">
    <property type="entry name" value="UMPK"/>
    <property type="match status" value="1"/>
</dbReference>
<dbReference type="FunFam" id="3.40.50.2020:FF:000010">
    <property type="entry name" value="Uridine-cytidine kinase"/>
    <property type="match status" value="1"/>
</dbReference>
<dbReference type="FunFam" id="3.40.50.300:FF:000200">
    <property type="entry name" value="Uridine-cytidine kinase"/>
    <property type="match status" value="1"/>
</dbReference>
<dbReference type="Gene3D" id="3.40.50.2020">
    <property type="match status" value="1"/>
</dbReference>
<dbReference type="Gene3D" id="3.40.50.300">
    <property type="entry name" value="P-loop containing nucleotide triphosphate hydrolases"/>
    <property type="match status" value="1"/>
</dbReference>
<dbReference type="InterPro" id="IPR027417">
    <property type="entry name" value="P-loop_NTPase"/>
</dbReference>
<dbReference type="InterPro" id="IPR000836">
    <property type="entry name" value="PRibTrfase_dom"/>
</dbReference>
<dbReference type="InterPro" id="IPR006083">
    <property type="entry name" value="PRK/URK"/>
</dbReference>
<dbReference type="InterPro" id="IPR029057">
    <property type="entry name" value="PRTase-like"/>
</dbReference>
<dbReference type="InterPro" id="IPR000764">
    <property type="entry name" value="Uridine_kinase-like"/>
</dbReference>
<dbReference type="NCBIfam" id="NF001097">
    <property type="entry name" value="PRK00129.1"/>
    <property type="match status" value="1"/>
</dbReference>
<dbReference type="NCBIfam" id="NF004018">
    <property type="entry name" value="PRK05480.1"/>
    <property type="match status" value="1"/>
</dbReference>
<dbReference type="NCBIfam" id="TIGR00235">
    <property type="entry name" value="udk"/>
    <property type="match status" value="1"/>
</dbReference>
<dbReference type="PANTHER" id="PTHR10285">
    <property type="entry name" value="URIDINE KINASE"/>
    <property type="match status" value="1"/>
</dbReference>
<dbReference type="Pfam" id="PF00485">
    <property type="entry name" value="PRK"/>
    <property type="match status" value="1"/>
</dbReference>
<dbReference type="Pfam" id="PF14681">
    <property type="entry name" value="UPRTase"/>
    <property type="match status" value="1"/>
</dbReference>
<dbReference type="PRINTS" id="PR00988">
    <property type="entry name" value="URIDINKINASE"/>
</dbReference>
<dbReference type="SUPFAM" id="SSF52540">
    <property type="entry name" value="P-loop containing nucleoside triphosphate hydrolases"/>
    <property type="match status" value="1"/>
</dbReference>
<dbReference type="SUPFAM" id="SSF53271">
    <property type="entry name" value="PRTase-like"/>
    <property type="match status" value="1"/>
</dbReference>